<name>BIOF_BUCBP</name>
<dbReference type="EC" id="2.3.1.47" evidence="1"/>
<dbReference type="EMBL" id="AE016826">
    <property type="protein sequence ID" value="AAO26996.1"/>
    <property type="molecule type" value="Genomic_DNA"/>
</dbReference>
<dbReference type="RefSeq" id="WP_011091397.1">
    <property type="nucleotide sequence ID" value="NC_004545.1"/>
</dbReference>
<dbReference type="SMR" id="Q89AK6"/>
<dbReference type="STRING" id="224915.bbp_271"/>
<dbReference type="KEGG" id="bab:bbp_271"/>
<dbReference type="eggNOG" id="COG0156">
    <property type="taxonomic scope" value="Bacteria"/>
</dbReference>
<dbReference type="HOGENOM" id="CLU_015846_11_2_6"/>
<dbReference type="OrthoDB" id="9807157at2"/>
<dbReference type="UniPathway" id="UPA00078"/>
<dbReference type="Proteomes" id="UP000000601">
    <property type="component" value="Chromosome"/>
</dbReference>
<dbReference type="GO" id="GO:0008710">
    <property type="term" value="F:8-amino-7-oxononanoate synthase activity"/>
    <property type="evidence" value="ECO:0007669"/>
    <property type="project" value="UniProtKB-UniRule"/>
</dbReference>
<dbReference type="GO" id="GO:0030170">
    <property type="term" value="F:pyridoxal phosphate binding"/>
    <property type="evidence" value="ECO:0007669"/>
    <property type="project" value="UniProtKB-UniRule"/>
</dbReference>
<dbReference type="GO" id="GO:0009102">
    <property type="term" value="P:biotin biosynthetic process"/>
    <property type="evidence" value="ECO:0007669"/>
    <property type="project" value="UniProtKB-UniRule"/>
</dbReference>
<dbReference type="Gene3D" id="3.90.1150.10">
    <property type="entry name" value="Aspartate Aminotransferase, domain 1"/>
    <property type="match status" value="1"/>
</dbReference>
<dbReference type="Gene3D" id="3.40.640.10">
    <property type="entry name" value="Type I PLP-dependent aspartate aminotransferase-like (Major domain)"/>
    <property type="match status" value="1"/>
</dbReference>
<dbReference type="HAMAP" id="MF_01693">
    <property type="entry name" value="BioF_aminotrans_2"/>
    <property type="match status" value="1"/>
</dbReference>
<dbReference type="InterPro" id="IPR001917">
    <property type="entry name" value="Aminotrans_II_pyridoxalP_BS"/>
</dbReference>
<dbReference type="InterPro" id="IPR004839">
    <property type="entry name" value="Aminotransferase_I/II_large"/>
</dbReference>
<dbReference type="InterPro" id="IPR050087">
    <property type="entry name" value="AON_synthase_class-II"/>
</dbReference>
<dbReference type="InterPro" id="IPR022834">
    <property type="entry name" value="AONS_Proteobacteria"/>
</dbReference>
<dbReference type="InterPro" id="IPR015424">
    <property type="entry name" value="PyrdxlP-dep_Trfase"/>
</dbReference>
<dbReference type="InterPro" id="IPR015421">
    <property type="entry name" value="PyrdxlP-dep_Trfase_major"/>
</dbReference>
<dbReference type="InterPro" id="IPR015422">
    <property type="entry name" value="PyrdxlP-dep_Trfase_small"/>
</dbReference>
<dbReference type="PANTHER" id="PTHR13693:SF100">
    <property type="entry name" value="8-AMINO-7-OXONONANOATE SYNTHASE"/>
    <property type="match status" value="1"/>
</dbReference>
<dbReference type="PANTHER" id="PTHR13693">
    <property type="entry name" value="CLASS II AMINOTRANSFERASE/8-AMINO-7-OXONONANOATE SYNTHASE"/>
    <property type="match status" value="1"/>
</dbReference>
<dbReference type="Pfam" id="PF00155">
    <property type="entry name" value="Aminotran_1_2"/>
    <property type="match status" value="1"/>
</dbReference>
<dbReference type="SUPFAM" id="SSF53383">
    <property type="entry name" value="PLP-dependent transferases"/>
    <property type="match status" value="1"/>
</dbReference>
<dbReference type="PROSITE" id="PS00599">
    <property type="entry name" value="AA_TRANSFER_CLASS_2"/>
    <property type="match status" value="1"/>
</dbReference>
<proteinExistence type="inferred from homology"/>
<protein>
    <recommendedName>
        <fullName evidence="1">8-amino-7-oxononanoate synthase</fullName>
        <shortName evidence="1">AONS</shortName>
        <ecNumber evidence="1">2.3.1.47</ecNumber>
    </recommendedName>
    <alternativeName>
        <fullName evidence="1">7-keto-8-amino-pelargonic acid synthase</fullName>
        <shortName evidence="1">7-KAP synthase</shortName>
        <shortName evidence="1">KAPA synthase</shortName>
    </alternativeName>
    <alternativeName>
        <fullName evidence="1">8-amino-7-ketopelargonate synthase</fullName>
    </alternativeName>
</protein>
<gene>
    <name evidence="1" type="primary">bioF</name>
    <name type="ordered locus">bbp_271</name>
</gene>
<keyword id="KW-0093">Biotin biosynthesis</keyword>
<keyword id="KW-0663">Pyridoxal phosphate</keyword>
<keyword id="KW-1185">Reference proteome</keyword>
<keyword id="KW-0808">Transferase</keyword>
<accession>Q89AK6</accession>
<organism>
    <name type="scientific">Buchnera aphidicola subsp. Baizongia pistaciae (strain Bp)</name>
    <dbReference type="NCBI Taxonomy" id="224915"/>
    <lineage>
        <taxon>Bacteria</taxon>
        <taxon>Pseudomonadati</taxon>
        <taxon>Pseudomonadota</taxon>
        <taxon>Gammaproteobacteria</taxon>
        <taxon>Enterobacterales</taxon>
        <taxon>Erwiniaceae</taxon>
        <taxon>Buchnera</taxon>
    </lineage>
</organism>
<evidence type="ECO:0000255" key="1">
    <source>
        <dbReference type="HAMAP-Rule" id="MF_01693"/>
    </source>
</evidence>
<comment type="function">
    <text evidence="1">Catalyzes the decarboxylative condensation of pimeloyl-[acyl-carrier protein] and L-alanine to produce 8-amino-7-oxononanoate (AON), [acyl-carrier protein], and carbon dioxide.</text>
</comment>
<comment type="catalytic activity">
    <reaction evidence="1">
        <text>6-carboxyhexanoyl-[ACP] + L-alanine + H(+) = (8S)-8-amino-7-oxononanoate + holo-[ACP] + CO2</text>
        <dbReference type="Rhea" id="RHEA:42288"/>
        <dbReference type="Rhea" id="RHEA-COMP:9685"/>
        <dbReference type="Rhea" id="RHEA-COMP:9955"/>
        <dbReference type="ChEBI" id="CHEBI:15378"/>
        <dbReference type="ChEBI" id="CHEBI:16526"/>
        <dbReference type="ChEBI" id="CHEBI:57972"/>
        <dbReference type="ChEBI" id="CHEBI:64479"/>
        <dbReference type="ChEBI" id="CHEBI:78846"/>
        <dbReference type="ChEBI" id="CHEBI:149468"/>
        <dbReference type="EC" id="2.3.1.47"/>
    </reaction>
</comment>
<comment type="cofactor">
    <cofactor evidence="1">
        <name>pyridoxal 5'-phosphate</name>
        <dbReference type="ChEBI" id="CHEBI:597326"/>
    </cofactor>
</comment>
<comment type="pathway">
    <text evidence="1">Cofactor biosynthesis; biotin biosynthesis.</text>
</comment>
<comment type="subunit">
    <text evidence="1">Homodimer.</text>
</comment>
<comment type="similarity">
    <text evidence="1">Belongs to the class-II pyridoxal-phosphate-dependent aminotransferase family. BioF subfamily.</text>
</comment>
<sequence>MNWNKRINHKLNMHIFNKKFRVKVAVQKNNNRIINVNGMQYINFSSNDYLGLRNNARIVQAWKTAATRYGIGSTGSSLITGYSTIHQSLEEKLAKWLDYPKAILFISGYTANTAIISTLIQKNDRIFMDKLSHSSILEPSYNSSGKCYRFIHNNPSSLMNKFYSSSGKNPLIITEGIFSMDGDIAPLSIISSFSKKIKGLLMVDDAHGIGVSGYNGKGSCEQHRVKPDILTITFGKAFGISGAAVLCSNNIAEYLWQFSKHLMFSTAMPIAQAYAIRQALYCIQHADKLRRKLQENINFFLKNSQCLSHLLKCSHTAIQPIIIGDNEETMILSDQLKSKGIWVNAIRPPTVPNKSSRLRITLNALHTKEDIEQLIESIYKLYDR</sequence>
<feature type="chain" id="PRO_0000163810" description="8-amino-7-oxononanoate synthase">
    <location>
        <begin position="1"/>
        <end position="384"/>
    </location>
</feature>
<feature type="binding site" evidence="1">
    <location>
        <position position="21"/>
    </location>
    <ligand>
        <name>substrate</name>
    </ligand>
</feature>
<feature type="binding site" evidence="1">
    <location>
        <begin position="108"/>
        <end position="109"/>
    </location>
    <ligand>
        <name>pyridoxal 5'-phosphate</name>
        <dbReference type="ChEBI" id="CHEBI:597326"/>
    </ligand>
</feature>
<feature type="binding site" evidence="1">
    <location>
        <position position="133"/>
    </location>
    <ligand>
        <name>substrate</name>
    </ligand>
</feature>
<feature type="binding site" evidence="1">
    <location>
        <position position="179"/>
    </location>
    <ligand>
        <name>pyridoxal 5'-phosphate</name>
        <dbReference type="ChEBI" id="CHEBI:597326"/>
    </ligand>
</feature>
<feature type="binding site" evidence="1">
    <location>
        <position position="207"/>
    </location>
    <ligand>
        <name>pyridoxal 5'-phosphate</name>
        <dbReference type="ChEBI" id="CHEBI:597326"/>
    </ligand>
</feature>
<feature type="binding site" evidence="1">
    <location>
        <position position="233"/>
    </location>
    <ligand>
        <name>pyridoxal 5'-phosphate</name>
        <dbReference type="ChEBI" id="CHEBI:597326"/>
    </ligand>
</feature>
<feature type="binding site" evidence="1">
    <location>
        <position position="350"/>
    </location>
    <ligand>
        <name>substrate</name>
    </ligand>
</feature>
<feature type="modified residue" description="N6-(pyridoxal phosphate)lysine" evidence="1">
    <location>
        <position position="236"/>
    </location>
</feature>
<reference key="1">
    <citation type="journal article" date="2003" name="Proc. Natl. Acad. Sci. U.S.A.">
        <title>Reductive genome evolution in Buchnera aphidicola.</title>
        <authorList>
            <person name="van Ham R.C.H.J."/>
            <person name="Kamerbeek J."/>
            <person name="Palacios C."/>
            <person name="Rausell C."/>
            <person name="Abascal F."/>
            <person name="Bastolla U."/>
            <person name="Fernandez J.M."/>
            <person name="Jimenez L."/>
            <person name="Postigo M."/>
            <person name="Silva F.J."/>
            <person name="Tamames J."/>
            <person name="Viguera E."/>
            <person name="Latorre A."/>
            <person name="Valencia A."/>
            <person name="Moran F."/>
            <person name="Moya A."/>
        </authorList>
    </citation>
    <scope>NUCLEOTIDE SEQUENCE [LARGE SCALE GENOMIC DNA]</scope>
    <source>
        <strain>Bp</strain>
    </source>
</reference>